<proteinExistence type="inferred from homology"/>
<keyword id="KW-0028">Amino-acid biosynthesis</keyword>
<keyword id="KW-0055">Arginine biosynthesis</keyword>
<keyword id="KW-0963">Cytoplasm</keyword>
<keyword id="KW-0456">Lyase</keyword>
<keyword id="KW-1185">Reference proteome</keyword>
<feature type="chain" id="PRO_1000201702" description="Argininosuccinate lyase">
    <location>
        <begin position="1"/>
        <end position="476"/>
    </location>
</feature>
<reference key="1">
    <citation type="submission" date="2008-03" db="EMBL/GenBank/DDBJ databases">
        <title>Complete sequence of Leptothrix cholodnii SP-6.</title>
        <authorList>
            <consortium name="US DOE Joint Genome Institute"/>
            <person name="Copeland A."/>
            <person name="Lucas S."/>
            <person name="Lapidus A."/>
            <person name="Glavina del Rio T."/>
            <person name="Dalin E."/>
            <person name="Tice H."/>
            <person name="Bruce D."/>
            <person name="Goodwin L."/>
            <person name="Pitluck S."/>
            <person name="Chertkov O."/>
            <person name="Brettin T."/>
            <person name="Detter J.C."/>
            <person name="Han C."/>
            <person name="Kuske C.R."/>
            <person name="Schmutz J."/>
            <person name="Larimer F."/>
            <person name="Land M."/>
            <person name="Hauser L."/>
            <person name="Kyrpides N."/>
            <person name="Lykidis A."/>
            <person name="Emerson D."/>
            <person name="Richardson P."/>
        </authorList>
    </citation>
    <scope>NUCLEOTIDE SEQUENCE [LARGE SCALE GENOMIC DNA]</scope>
    <source>
        <strain>ATCC 51168 / LMG 8142 / SP-6</strain>
    </source>
</reference>
<comment type="catalytic activity">
    <reaction evidence="1">
        <text>2-(N(omega)-L-arginino)succinate = fumarate + L-arginine</text>
        <dbReference type="Rhea" id="RHEA:24020"/>
        <dbReference type="ChEBI" id="CHEBI:29806"/>
        <dbReference type="ChEBI" id="CHEBI:32682"/>
        <dbReference type="ChEBI" id="CHEBI:57472"/>
        <dbReference type="EC" id="4.3.2.1"/>
    </reaction>
</comment>
<comment type="pathway">
    <text evidence="1">Amino-acid biosynthesis; L-arginine biosynthesis; L-arginine from L-ornithine and carbamoyl phosphate: step 3/3.</text>
</comment>
<comment type="subcellular location">
    <subcellularLocation>
        <location evidence="1">Cytoplasm</location>
    </subcellularLocation>
</comment>
<comment type="similarity">
    <text evidence="1">Belongs to the lyase 1 family. Argininosuccinate lyase subfamily.</text>
</comment>
<name>ARLY_LEPCP</name>
<protein>
    <recommendedName>
        <fullName evidence="1">Argininosuccinate lyase</fullName>
        <shortName evidence="1">ASAL</shortName>
        <ecNumber evidence="1">4.3.2.1</ecNumber>
    </recommendedName>
    <alternativeName>
        <fullName evidence="1">Arginosuccinase</fullName>
    </alternativeName>
</protein>
<sequence>MSTNQLDTKSQAWSALFSEPMSELVKRYTASVFFDKRLWQADIAGSLAHAEMLAAQQIIGAQDLADIQRGMAQITQEIESGAFEWKLELEDVHLNIEARLTQLVGDAGKRLHTGRSRNDQVATDVRLWLRGEIDATAVLLADMQRALVHVASNNVDVILPGFTHLQVAQPVSFAHHLLAYVEMFARDAERLADLRKRVNRLPLGSAALAGTSYPLDRERVARTLGFDGVCQNSLDAVSDRDFAIEFTGFATLVMIHVSRMAEEIVLWMSQNFGFINLSDRYCTGSSIMPQKRNPDVAELARGKSGRVVGHLMGLITLMKGQPLAYNKDNQEDKEPLFDTVDTVKDTLRIMAEMIGGEVAADGSRSGGLTVKAEAMERAALRGYATATDLADYLVKKGLPFRDAHEVVAHAVKDAIALGKDLSELPLETLQGYNATITADVHAALTLAGSLNARNTLGGTAPSQVRAQIERHQARLG</sequence>
<evidence type="ECO:0000255" key="1">
    <source>
        <dbReference type="HAMAP-Rule" id="MF_00006"/>
    </source>
</evidence>
<organism>
    <name type="scientific">Leptothrix cholodnii (strain ATCC 51168 / LMG 8142 / SP-6)</name>
    <name type="common">Leptothrix discophora (strain SP-6)</name>
    <dbReference type="NCBI Taxonomy" id="395495"/>
    <lineage>
        <taxon>Bacteria</taxon>
        <taxon>Pseudomonadati</taxon>
        <taxon>Pseudomonadota</taxon>
        <taxon>Betaproteobacteria</taxon>
        <taxon>Burkholderiales</taxon>
        <taxon>Sphaerotilaceae</taxon>
        <taxon>Leptothrix</taxon>
    </lineage>
</organism>
<accession>B1Y070</accession>
<gene>
    <name evidence="1" type="primary">argH</name>
    <name type="ordered locus">Lcho_3091</name>
</gene>
<dbReference type="EC" id="4.3.2.1" evidence="1"/>
<dbReference type="EMBL" id="CP001013">
    <property type="protein sequence ID" value="ACB35351.1"/>
    <property type="molecule type" value="Genomic_DNA"/>
</dbReference>
<dbReference type="RefSeq" id="WP_012348102.1">
    <property type="nucleotide sequence ID" value="NC_010524.1"/>
</dbReference>
<dbReference type="SMR" id="B1Y070"/>
<dbReference type="STRING" id="395495.Lcho_3091"/>
<dbReference type="KEGG" id="lch:Lcho_3091"/>
<dbReference type="eggNOG" id="COG0165">
    <property type="taxonomic scope" value="Bacteria"/>
</dbReference>
<dbReference type="HOGENOM" id="CLU_027272_2_3_4"/>
<dbReference type="OrthoDB" id="9769623at2"/>
<dbReference type="UniPathway" id="UPA00068">
    <property type="reaction ID" value="UER00114"/>
</dbReference>
<dbReference type="Proteomes" id="UP000001693">
    <property type="component" value="Chromosome"/>
</dbReference>
<dbReference type="GO" id="GO:0005829">
    <property type="term" value="C:cytosol"/>
    <property type="evidence" value="ECO:0007669"/>
    <property type="project" value="TreeGrafter"/>
</dbReference>
<dbReference type="GO" id="GO:0004056">
    <property type="term" value="F:argininosuccinate lyase activity"/>
    <property type="evidence" value="ECO:0007669"/>
    <property type="project" value="UniProtKB-UniRule"/>
</dbReference>
<dbReference type="GO" id="GO:0042450">
    <property type="term" value="P:arginine biosynthetic process via ornithine"/>
    <property type="evidence" value="ECO:0007669"/>
    <property type="project" value="InterPro"/>
</dbReference>
<dbReference type="GO" id="GO:0006526">
    <property type="term" value="P:L-arginine biosynthetic process"/>
    <property type="evidence" value="ECO:0007669"/>
    <property type="project" value="UniProtKB-UniRule"/>
</dbReference>
<dbReference type="CDD" id="cd01359">
    <property type="entry name" value="Argininosuccinate_lyase"/>
    <property type="match status" value="1"/>
</dbReference>
<dbReference type="FunFam" id="1.10.275.10:FF:000002">
    <property type="entry name" value="Argininosuccinate lyase"/>
    <property type="match status" value="1"/>
</dbReference>
<dbReference type="FunFam" id="1.10.40.30:FF:000001">
    <property type="entry name" value="Argininosuccinate lyase"/>
    <property type="match status" value="1"/>
</dbReference>
<dbReference type="FunFam" id="1.20.200.10:FF:000015">
    <property type="entry name" value="argininosuccinate lyase isoform X2"/>
    <property type="match status" value="1"/>
</dbReference>
<dbReference type="Gene3D" id="1.10.40.30">
    <property type="entry name" value="Fumarase/aspartase (C-terminal domain)"/>
    <property type="match status" value="1"/>
</dbReference>
<dbReference type="Gene3D" id="1.20.200.10">
    <property type="entry name" value="Fumarase/aspartase (Central domain)"/>
    <property type="match status" value="1"/>
</dbReference>
<dbReference type="Gene3D" id="1.10.275.10">
    <property type="entry name" value="Fumarase/aspartase (N-terminal domain)"/>
    <property type="match status" value="1"/>
</dbReference>
<dbReference type="HAMAP" id="MF_00006">
    <property type="entry name" value="Arg_succ_lyase"/>
    <property type="match status" value="1"/>
</dbReference>
<dbReference type="InterPro" id="IPR029419">
    <property type="entry name" value="Arg_succ_lyase_C"/>
</dbReference>
<dbReference type="InterPro" id="IPR009049">
    <property type="entry name" value="Argininosuccinate_lyase"/>
</dbReference>
<dbReference type="InterPro" id="IPR024083">
    <property type="entry name" value="Fumarase/histidase_N"/>
</dbReference>
<dbReference type="InterPro" id="IPR020557">
    <property type="entry name" value="Fumarate_lyase_CS"/>
</dbReference>
<dbReference type="InterPro" id="IPR000362">
    <property type="entry name" value="Fumarate_lyase_fam"/>
</dbReference>
<dbReference type="InterPro" id="IPR022761">
    <property type="entry name" value="Fumarate_lyase_N"/>
</dbReference>
<dbReference type="InterPro" id="IPR008948">
    <property type="entry name" value="L-Aspartase-like"/>
</dbReference>
<dbReference type="NCBIfam" id="TIGR00838">
    <property type="entry name" value="argH"/>
    <property type="match status" value="1"/>
</dbReference>
<dbReference type="PANTHER" id="PTHR43814">
    <property type="entry name" value="ARGININOSUCCINATE LYASE"/>
    <property type="match status" value="1"/>
</dbReference>
<dbReference type="PANTHER" id="PTHR43814:SF1">
    <property type="entry name" value="ARGININOSUCCINATE LYASE"/>
    <property type="match status" value="1"/>
</dbReference>
<dbReference type="Pfam" id="PF14698">
    <property type="entry name" value="ASL_C2"/>
    <property type="match status" value="1"/>
</dbReference>
<dbReference type="Pfam" id="PF00206">
    <property type="entry name" value="Lyase_1"/>
    <property type="match status" value="1"/>
</dbReference>
<dbReference type="PRINTS" id="PR00145">
    <property type="entry name" value="ARGSUCLYASE"/>
</dbReference>
<dbReference type="PRINTS" id="PR00149">
    <property type="entry name" value="FUMRATELYASE"/>
</dbReference>
<dbReference type="SUPFAM" id="SSF48557">
    <property type="entry name" value="L-aspartase-like"/>
    <property type="match status" value="1"/>
</dbReference>
<dbReference type="PROSITE" id="PS00163">
    <property type="entry name" value="FUMARATE_LYASES"/>
    <property type="match status" value="1"/>
</dbReference>